<gene>
    <name type="ordered locus">HQ_1341A</name>
</gene>
<accession>Q18KI0</accession>
<organism>
    <name type="scientific">Haloquadratum walsbyi (strain DSM 16790 / HBSQ001)</name>
    <dbReference type="NCBI Taxonomy" id="362976"/>
    <lineage>
        <taxon>Archaea</taxon>
        <taxon>Methanobacteriati</taxon>
        <taxon>Methanobacteriota</taxon>
        <taxon>Stenosarchaea group</taxon>
        <taxon>Halobacteria</taxon>
        <taxon>Halobacteriales</taxon>
        <taxon>Haloferacaceae</taxon>
        <taxon>Haloquadratum</taxon>
    </lineage>
</organism>
<evidence type="ECO:0000255" key="1">
    <source>
        <dbReference type="HAMAP-Rule" id="MF_01447"/>
    </source>
</evidence>
<comment type="function">
    <text evidence="1">Required for the formation of a threonylcarbamoyl group on adenosine at position 37 (t(6)A37) in tRNAs that read codons beginning with adenine. Is a component of the KEOPS complex that is probably involved in the transfer of the threonylcarbamoyl moiety of threonylcarbamoyl-AMP (TC-AMP) to the N6 group of A37. The Kae1 domain likely plays a direct catalytic role in this reaction. The Bud32 domain probably displays kinase activity that regulates Kae1 function.</text>
</comment>
<comment type="catalytic activity">
    <reaction evidence="1">
        <text>L-seryl-[protein] + ATP = O-phospho-L-seryl-[protein] + ADP + H(+)</text>
        <dbReference type="Rhea" id="RHEA:17989"/>
        <dbReference type="Rhea" id="RHEA-COMP:9863"/>
        <dbReference type="Rhea" id="RHEA-COMP:11604"/>
        <dbReference type="ChEBI" id="CHEBI:15378"/>
        <dbReference type="ChEBI" id="CHEBI:29999"/>
        <dbReference type="ChEBI" id="CHEBI:30616"/>
        <dbReference type="ChEBI" id="CHEBI:83421"/>
        <dbReference type="ChEBI" id="CHEBI:456216"/>
        <dbReference type="EC" id="2.7.11.1"/>
    </reaction>
</comment>
<comment type="catalytic activity">
    <reaction evidence="1">
        <text>L-threonyl-[protein] + ATP = O-phospho-L-threonyl-[protein] + ADP + H(+)</text>
        <dbReference type="Rhea" id="RHEA:46608"/>
        <dbReference type="Rhea" id="RHEA-COMP:11060"/>
        <dbReference type="Rhea" id="RHEA-COMP:11605"/>
        <dbReference type="ChEBI" id="CHEBI:15378"/>
        <dbReference type="ChEBI" id="CHEBI:30013"/>
        <dbReference type="ChEBI" id="CHEBI:30616"/>
        <dbReference type="ChEBI" id="CHEBI:61977"/>
        <dbReference type="ChEBI" id="CHEBI:456216"/>
        <dbReference type="EC" id="2.7.11.1"/>
    </reaction>
</comment>
<comment type="catalytic activity">
    <reaction evidence="1">
        <text>L-threonylcarbamoyladenylate + adenosine(37) in tRNA = N(6)-L-threonylcarbamoyladenosine(37) in tRNA + AMP + H(+)</text>
        <dbReference type="Rhea" id="RHEA:37059"/>
        <dbReference type="Rhea" id="RHEA-COMP:10162"/>
        <dbReference type="Rhea" id="RHEA-COMP:10163"/>
        <dbReference type="ChEBI" id="CHEBI:15378"/>
        <dbReference type="ChEBI" id="CHEBI:73682"/>
        <dbReference type="ChEBI" id="CHEBI:74411"/>
        <dbReference type="ChEBI" id="CHEBI:74418"/>
        <dbReference type="ChEBI" id="CHEBI:456215"/>
        <dbReference type="EC" id="2.3.1.234"/>
    </reaction>
</comment>
<comment type="cofactor">
    <cofactor evidence="1">
        <name>Fe(2+)</name>
        <dbReference type="ChEBI" id="CHEBI:29033"/>
    </cofactor>
    <text evidence="1">Binds 1 Fe(2+) ion per subunit.</text>
</comment>
<comment type="subunit">
    <text evidence="1">Component of the KEOPS complex that consists of Kae1, Bud32, Cgi121 and Pcc1; the whole complex dimerizes.</text>
</comment>
<comment type="subcellular location">
    <subcellularLocation>
        <location evidence="1">Cytoplasm</location>
    </subcellularLocation>
</comment>
<comment type="similarity">
    <text evidence="1">In the N-terminal section; belongs to the KAE1 / TsaD family.</text>
</comment>
<comment type="similarity">
    <text evidence="1">In the C-terminal section; belongs to the protein kinase superfamily. Tyr protein kinase family. BUD32 subfamily.</text>
</comment>
<feature type="chain" id="PRO_0000303649" description="Probable bifunctional tRNA threonylcarbamoyladenosine biosynthesis protein">
    <location>
        <begin position="1"/>
        <end position="533"/>
    </location>
</feature>
<feature type="domain" description="Protein kinase" evidence="1">
    <location>
        <begin position="339"/>
        <end position="533"/>
    </location>
</feature>
<feature type="region of interest" description="Kae1">
    <location>
        <begin position="1"/>
        <end position="328"/>
    </location>
</feature>
<feature type="active site" description="Proton acceptor; for kinase activity" evidence="1">
    <location>
        <position position="452"/>
    </location>
</feature>
<feature type="binding site" evidence="1">
    <location>
        <position position="112"/>
    </location>
    <ligand>
        <name>Fe cation</name>
        <dbReference type="ChEBI" id="CHEBI:24875"/>
    </ligand>
</feature>
<feature type="binding site" evidence="1">
    <location>
        <position position="116"/>
    </location>
    <ligand>
        <name>Fe cation</name>
        <dbReference type="ChEBI" id="CHEBI:24875"/>
    </ligand>
</feature>
<feature type="binding site" evidence="1">
    <location>
        <begin position="133"/>
        <end position="137"/>
    </location>
    <ligand>
        <name>L-threonylcarbamoyladenylate</name>
        <dbReference type="ChEBI" id="CHEBI:73682"/>
    </ligand>
</feature>
<feature type="binding site" evidence="1">
    <location>
        <position position="165"/>
    </location>
    <ligand>
        <name>L-threonylcarbamoyladenylate</name>
        <dbReference type="ChEBI" id="CHEBI:73682"/>
    </ligand>
</feature>
<feature type="binding site" evidence="1">
    <location>
        <position position="178"/>
    </location>
    <ligand>
        <name>L-threonylcarbamoyladenylate</name>
        <dbReference type="ChEBI" id="CHEBI:73682"/>
    </ligand>
</feature>
<feature type="binding site" evidence="1">
    <location>
        <position position="182"/>
    </location>
    <ligand>
        <name>L-threonylcarbamoyladenylate</name>
        <dbReference type="ChEBI" id="CHEBI:73682"/>
    </ligand>
</feature>
<feature type="binding site" evidence="1">
    <location>
        <position position="261"/>
    </location>
    <ligand>
        <name>L-threonylcarbamoyladenylate</name>
        <dbReference type="ChEBI" id="CHEBI:73682"/>
    </ligand>
</feature>
<feature type="binding site" evidence="1">
    <location>
        <position position="289"/>
    </location>
    <ligand>
        <name>Fe cation</name>
        <dbReference type="ChEBI" id="CHEBI:24875"/>
    </ligand>
</feature>
<feature type="binding site" evidence="1">
    <location>
        <begin position="347"/>
        <end position="354"/>
    </location>
    <ligand>
        <name>ATP</name>
        <dbReference type="ChEBI" id="CHEBI:30616"/>
    </ligand>
</feature>
<feature type="binding site" evidence="1">
    <location>
        <position position="363"/>
    </location>
    <ligand>
        <name>ATP</name>
        <dbReference type="ChEBI" id="CHEBI:30616"/>
    </ligand>
</feature>
<proteinExistence type="inferred from homology"/>
<reference key="1">
    <citation type="journal article" date="2006" name="BMC Genomics">
        <title>The genome of the square archaeon Haloquadratum walsbyi: life at the limits of water activity.</title>
        <authorList>
            <person name="Bolhuis H."/>
            <person name="Palm P."/>
            <person name="Wende A."/>
            <person name="Falb M."/>
            <person name="Rampp M."/>
            <person name="Rodriguez-Valera F."/>
            <person name="Pfeiffer F."/>
            <person name="Oesterhelt D."/>
        </authorList>
    </citation>
    <scope>NUCLEOTIDE SEQUENCE [LARGE SCALE GENOMIC DNA]</scope>
    <source>
        <strain>DSM 16790 / HBSQ001</strain>
    </source>
</reference>
<keyword id="KW-0012">Acyltransferase</keyword>
<keyword id="KW-0067">ATP-binding</keyword>
<keyword id="KW-0963">Cytoplasm</keyword>
<keyword id="KW-0408">Iron</keyword>
<keyword id="KW-0418">Kinase</keyword>
<keyword id="KW-0479">Metal-binding</keyword>
<keyword id="KW-0511">Multifunctional enzyme</keyword>
<keyword id="KW-0547">Nucleotide-binding</keyword>
<keyword id="KW-1185">Reference proteome</keyword>
<keyword id="KW-0723">Serine/threonine-protein kinase</keyword>
<keyword id="KW-0808">Transferase</keyword>
<keyword id="KW-0819">tRNA processing</keyword>
<sequence>MRILGIEGTAWAASAALYNTHDETIVIESDPYQPDSGGLHPREAAEHMSTALPEVISTILERAVSSGNTDAIGIDAIAFSRGPGLGPCLRVVGTAARTLTQALSVPLIGVNHMIAHLEIGRHQSGFTTPVCLNASGANAHLLGYHRRQYQVLGETMDTGVGNAIDKFTRHLGWNHPGGPKVEAAATDGSYHDLPYVVKGMDFSFSGIMSAAKDAVDNEVPVVDVCTGLQETIFAMLTEVAERALSLTGSNELVLGGGVGQNDRLREMLSTMCTARGASFYAPESRFLRDNAGMIAVLGAAMYEAGQTISVNDSAVDPTFRPDAVTVTWRDDETSVTRTPATLDKTPVRGAEAIVRRINDHVVKRRVEKSYRHPKLDRRLRAERTRAEARLTSAARRLGVPTPLIFDADPETGTLVFEYVGETDLAADLTVSRCHAVGQHLGRIHNAGFVHGDPTTRNVRVDSAQNYLIDFGLGYHTDHVEDHAMDLHVFIQSVTGTASDPAPLITAFESGYAETGISTVQSRLRDIESRGRYH</sequence>
<name>KAE1B_HALWD</name>
<dbReference type="EC" id="2.3.1.234" evidence="1"/>
<dbReference type="EC" id="2.7.11.1" evidence="1"/>
<dbReference type="EMBL" id="AM180088">
    <property type="protein sequence ID" value="CAJ51469.1"/>
    <property type="molecule type" value="Genomic_DNA"/>
</dbReference>
<dbReference type="RefSeq" id="WP_011570626.1">
    <property type="nucleotide sequence ID" value="NC_008212.1"/>
</dbReference>
<dbReference type="SMR" id="Q18KI0"/>
<dbReference type="STRING" id="362976.HQ_1341A"/>
<dbReference type="GeneID" id="4194019"/>
<dbReference type="KEGG" id="hwa:HQ_1341A"/>
<dbReference type="eggNOG" id="arCOG01185">
    <property type="taxonomic scope" value="Archaea"/>
</dbReference>
<dbReference type="HOGENOM" id="CLU_023208_2_2_2"/>
<dbReference type="Proteomes" id="UP000001975">
    <property type="component" value="Chromosome"/>
</dbReference>
<dbReference type="GO" id="GO:0005737">
    <property type="term" value="C:cytoplasm"/>
    <property type="evidence" value="ECO:0007669"/>
    <property type="project" value="UniProtKB-SubCell"/>
</dbReference>
<dbReference type="GO" id="GO:0000408">
    <property type="term" value="C:EKC/KEOPS complex"/>
    <property type="evidence" value="ECO:0007669"/>
    <property type="project" value="InterPro"/>
</dbReference>
<dbReference type="GO" id="GO:0005524">
    <property type="term" value="F:ATP binding"/>
    <property type="evidence" value="ECO:0007669"/>
    <property type="project" value="UniProtKB-UniRule"/>
</dbReference>
<dbReference type="GO" id="GO:0005506">
    <property type="term" value="F:iron ion binding"/>
    <property type="evidence" value="ECO:0007669"/>
    <property type="project" value="UniProtKB-UniRule"/>
</dbReference>
<dbReference type="GO" id="GO:0004222">
    <property type="term" value="F:metalloendopeptidase activity"/>
    <property type="evidence" value="ECO:0007669"/>
    <property type="project" value="InterPro"/>
</dbReference>
<dbReference type="GO" id="GO:0061711">
    <property type="term" value="F:N(6)-L-threonylcarbamoyladenine synthase activity"/>
    <property type="evidence" value="ECO:0007669"/>
    <property type="project" value="UniProtKB-EC"/>
</dbReference>
<dbReference type="GO" id="GO:0106310">
    <property type="term" value="F:protein serine kinase activity"/>
    <property type="evidence" value="ECO:0007669"/>
    <property type="project" value="RHEA"/>
</dbReference>
<dbReference type="GO" id="GO:0004674">
    <property type="term" value="F:protein serine/threonine kinase activity"/>
    <property type="evidence" value="ECO:0007669"/>
    <property type="project" value="UniProtKB-KW"/>
</dbReference>
<dbReference type="GO" id="GO:0004712">
    <property type="term" value="F:protein serine/threonine/tyrosine kinase activity"/>
    <property type="evidence" value="ECO:0007669"/>
    <property type="project" value="UniProtKB-UniRule"/>
</dbReference>
<dbReference type="GO" id="GO:0008270">
    <property type="term" value="F:zinc ion binding"/>
    <property type="evidence" value="ECO:0007669"/>
    <property type="project" value="InterPro"/>
</dbReference>
<dbReference type="GO" id="GO:0002949">
    <property type="term" value="P:tRNA threonylcarbamoyladenosine modification"/>
    <property type="evidence" value="ECO:0007669"/>
    <property type="project" value="UniProtKB-UniRule"/>
</dbReference>
<dbReference type="Gene3D" id="3.30.420.40">
    <property type="match status" value="2"/>
</dbReference>
<dbReference type="Gene3D" id="3.30.200.20">
    <property type="entry name" value="Phosphorylase Kinase, domain 1"/>
    <property type="match status" value="1"/>
</dbReference>
<dbReference type="Gene3D" id="1.10.510.10">
    <property type="entry name" value="Transferase(Phosphotransferase) domain 1"/>
    <property type="match status" value="1"/>
</dbReference>
<dbReference type="HAMAP" id="MF_01446">
    <property type="entry name" value="Kae1"/>
    <property type="match status" value="1"/>
</dbReference>
<dbReference type="HAMAP" id="MF_01447">
    <property type="entry name" value="Kae1_Bud32_arch"/>
    <property type="match status" value="1"/>
</dbReference>
<dbReference type="InterPro" id="IPR043129">
    <property type="entry name" value="ATPase_NBD"/>
</dbReference>
<dbReference type="InterPro" id="IPR022495">
    <property type="entry name" value="Bud32"/>
</dbReference>
<dbReference type="InterPro" id="IPR000905">
    <property type="entry name" value="Gcp-like_dom"/>
</dbReference>
<dbReference type="InterPro" id="IPR017861">
    <property type="entry name" value="KAE1/TsaD"/>
</dbReference>
<dbReference type="InterPro" id="IPR034680">
    <property type="entry name" value="Kae1_archaea_euk"/>
</dbReference>
<dbReference type="InterPro" id="IPR011009">
    <property type="entry name" value="Kinase-like_dom_sf"/>
</dbReference>
<dbReference type="InterPro" id="IPR000719">
    <property type="entry name" value="Prot_kinase_dom"/>
</dbReference>
<dbReference type="InterPro" id="IPR009220">
    <property type="entry name" value="tRNA_threonyl_synthase/kinase"/>
</dbReference>
<dbReference type="NCBIfam" id="TIGR03724">
    <property type="entry name" value="arch_bud32"/>
    <property type="match status" value="1"/>
</dbReference>
<dbReference type="NCBIfam" id="TIGR03722">
    <property type="entry name" value="arch_KAE1"/>
    <property type="match status" value="1"/>
</dbReference>
<dbReference type="NCBIfam" id="TIGR00329">
    <property type="entry name" value="gcp_kae1"/>
    <property type="match status" value="1"/>
</dbReference>
<dbReference type="NCBIfam" id="NF007174">
    <property type="entry name" value="PRK09605.1"/>
    <property type="match status" value="1"/>
</dbReference>
<dbReference type="NCBIfam" id="NF011462">
    <property type="entry name" value="PRK14879.1-3"/>
    <property type="match status" value="1"/>
</dbReference>
<dbReference type="PANTHER" id="PTHR11735">
    <property type="entry name" value="TRNA N6-ADENOSINE THREONYLCARBAMOYLTRANSFERASE"/>
    <property type="match status" value="1"/>
</dbReference>
<dbReference type="PANTHER" id="PTHR11735:SF14">
    <property type="entry name" value="TRNA N6-ADENOSINE THREONYLCARBAMOYLTRANSFERASE"/>
    <property type="match status" value="1"/>
</dbReference>
<dbReference type="Pfam" id="PF00814">
    <property type="entry name" value="TsaD"/>
    <property type="match status" value="1"/>
</dbReference>
<dbReference type="PIRSF" id="PIRSF036401">
    <property type="entry name" value="Gcp_STYKS"/>
    <property type="match status" value="1"/>
</dbReference>
<dbReference type="PRINTS" id="PR00789">
    <property type="entry name" value="OSIALOPTASE"/>
</dbReference>
<dbReference type="SUPFAM" id="SSF53067">
    <property type="entry name" value="Actin-like ATPase domain"/>
    <property type="match status" value="1"/>
</dbReference>
<dbReference type="SUPFAM" id="SSF56112">
    <property type="entry name" value="Protein kinase-like (PK-like)"/>
    <property type="match status" value="1"/>
</dbReference>
<dbReference type="PROSITE" id="PS50011">
    <property type="entry name" value="PROTEIN_KINASE_DOM"/>
    <property type="match status" value="1"/>
</dbReference>
<protein>
    <recommendedName>
        <fullName evidence="1">Probable bifunctional tRNA threonylcarbamoyladenosine biosynthesis protein</fullName>
    </recommendedName>
    <domain>
        <recommendedName>
            <fullName evidence="1">tRNA N6-adenosine threonylcarbamoyltransferase</fullName>
            <ecNumber evidence="1">2.3.1.234</ecNumber>
        </recommendedName>
        <alternativeName>
            <fullName>N6-L-threonylcarbamoyladenine synthase</fullName>
            <shortName>t(6)A synthase</shortName>
        </alternativeName>
        <alternativeName>
            <fullName evidence="1">t(6)A37 threonylcarbamoyladenosine biosynthesis protein Kae1</fullName>
        </alternativeName>
        <alternativeName>
            <fullName evidence="1">tRNA threonylcarbamoyladenosine biosynthesis protein Kae1</fullName>
        </alternativeName>
    </domain>
    <domain>
        <recommendedName>
            <fullName evidence="1">Serine/threonine-protein kinase Bud32</fullName>
            <ecNumber evidence="1">2.7.11.1</ecNumber>
        </recommendedName>
    </domain>
</protein>